<gene>
    <name evidence="1" type="primary">nuoN</name>
    <name type="ordered locus">GAU_1649</name>
</gene>
<accession>C1A8Y1</accession>
<reference key="1">
    <citation type="submission" date="2006-03" db="EMBL/GenBank/DDBJ databases">
        <title>Complete genome sequence of Gemmatimonas aurantiaca T-27 that represents a novel phylum Gemmatimonadetes.</title>
        <authorList>
            <person name="Takasaki K."/>
            <person name="Ichikawa N."/>
            <person name="Miura H."/>
            <person name="Matsushita S."/>
            <person name="Watanabe Y."/>
            <person name="Oguchi A."/>
            <person name="Ankai A."/>
            <person name="Yashiro I."/>
            <person name="Takahashi M."/>
            <person name="Terui Y."/>
            <person name="Fukui S."/>
            <person name="Yokoyama H."/>
            <person name="Tanikawa S."/>
            <person name="Hanada S."/>
            <person name="Kamagata Y."/>
            <person name="Fujita N."/>
        </authorList>
    </citation>
    <scope>NUCLEOTIDE SEQUENCE [LARGE SCALE GENOMIC DNA]</scope>
    <source>
        <strain>DSM 14586 / JCM 11422 / NBRC 100505 / T-27</strain>
    </source>
</reference>
<keyword id="KW-0997">Cell inner membrane</keyword>
<keyword id="KW-1003">Cell membrane</keyword>
<keyword id="KW-0472">Membrane</keyword>
<keyword id="KW-0520">NAD</keyword>
<keyword id="KW-0874">Quinone</keyword>
<keyword id="KW-1185">Reference proteome</keyword>
<keyword id="KW-1278">Translocase</keyword>
<keyword id="KW-0812">Transmembrane</keyword>
<keyword id="KW-1133">Transmembrane helix</keyword>
<keyword id="KW-0813">Transport</keyword>
<keyword id="KW-0830">Ubiquinone</keyword>
<protein>
    <recommendedName>
        <fullName evidence="1">NADH-quinone oxidoreductase subunit N</fullName>
        <ecNumber evidence="1">7.1.1.-</ecNumber>
    </recommendedName>
    <alternativeName>
        <fullName evidence="1">NADH dehydrogenase I subunit N</fullName>
    </alternativeName>
    <alternativeName>
        <fullName evidence="1">NDH-1 subunit N</fullName>
    </alternativeName>
</protein>
<sequence>MPDAMSAGAILRALLPEMLLSGGAMLLLLASVWTPQGNQPGAAEGAERTSVLARFGVILCLVVGLAVVIAWGDGAAGTPDGRVAGDGFRWAVDLVILLGTALALMLLEAEHQRSAAFGPEVPSLMLLASTGMMVLAGARDLMFVFLGVELMSLAVYVLAGVNRRSARSAEAAVKYFLLGAISSGFLLYGMALLFGATGSTRLQDITEWAAAQATLSPLFMSGVALLLVGLAFKVAAAPFHLWTPDVYDGAPLPVTAFMSATVKTAAFAVFARIMIEGLAVAAPRWHMGLWWLAAVTMVVGNVFALSQRNLVRMLAYSSIAHAGYLLVSIIVGDAAGTSALIFYVVSYTLATMGAFGVLITINGGRDRAPTLDDIAGLWLVRPWLAIAMTVFLLAFMGMPVLGGMGFFAKWYILQAALQAPAPQTILAVVLVIASAVSAAYYLAVVSAMFMRPRPEGQPVPSTTPLNQSLIATAAVALLVFGLYPTPIMELARRATTTTSPTSNPAAPRGEVRLQTASVPR</sequence>
<organism>
    <name type="scientific">Gemmatimonas aurantiaca (strain DSM 14586 / JCM 11422 / NBRC 100505 / T-27)</name>
    <dbReference type="NCBI Taxonomy" id="379066"/>
    <lineage>
        <taxon>Bacteria</taxon>
        <taxon>Pseudomonadati</taxon>
        <taxon>Gemmatimonadota</taxon>
        <taxon>Gemmatimonadia</taxon>
        <taxon>Gemmatimonadales</taxon>
        <taxon>Gemmatimonadaceae</taxon>
        <taxon>Gemmatimonas</taxon>
    </lineage>
</organism>
<evidence type="ECO:0000255" key="1">
    <source>
        <dbReference type="HAMAP-Rule" id="MF_00445"/>
    </source>
</evidence>
<evidence type="ECO:0000256" key="2">
    <source>
        <dbReference type="SAM" id="MobiDB-lite"/>
    </source>
</evidence>
<name>NUON_GEMAT</name>
<comment type="function">
    <text evidence="1">NDH-1 shuttles electrons from NADH, via FMN and iron-sulfur (Fe-S) centers, to quinones in the respiratory chain. The immediate electron acceptor for the enzyme in this species is believed to be ubiquinone. Couples the redox reaction to proton translocation (for every two electrons transferred, four hydrogen ions are translocated across the cytoplasmic membrane), and thus conserves the redox energy in a proton gradient.</text>
</comment>
<comment type="catalytic activity">
    <reaction evidence="1">
        <text>a quinone + NADH + 5 H(+)(in) = a quinol + NAD(+) + 4 H(+)(out)</text>
        <dbReference type="Rhea" id="RHEA:57888"/>
        <dbReference type="ChEBI" id="CHEBI:15378"/>
        <dbReference type="ChEBI" id="CHEBI:24646"/>
        <dbReference type="ChEBI" id="CHEBI:57540"/>
        <dbReference type="ChEBI" id="CHEBI:57945"/>
        <dbReference type="ChEBI" id="CHEBI:132124"/>
    </reaction>
</comment>
<comment type="subunit">
    <text evidence="1">NDH-1 is composed of 14 different subunits. Subunits NuoA, H, J, K, L, M, N constitute the membrane sector of the complex.</text>
</comment>
<comment type="subcellular location">
    <subcellularLocation>
        <location evidence="1">Cell inner membrane</location>
        <topology evidence="1">Multi-pass membrane protein</topology>
    </subcellularLocation>
</comment>
<comment type="similarity">
    <text evidence="1">Belongs to the complex I subunit 2 family.</text>
</comment>
<dbReference type="EC" id="7.1.1.-" evidence="1"/>
<dbReference type="EMBL" id="AP009153">
    <property type="protein sequence ID" value="BAH38691.1"/>
    <property type="molecule type" value="Genomic_DNA"/>
</dbReference>
<dbReference type="RefSeq" id="WP_012683138.1">
    <property type="nucleotide sequence ID" value="NC_012489.1"/>
</dbReference>
<dbReference type="SMR" id="C1A8Y1"/>
<dbReference type="STRING" id="379066.GAU_1649"/>
<dbReference type="KEGG" id="gau:GAU_1649"/>
<dbReference type="eggNOG" id="COG1007">
    <property type="taxonomic scope" value="Bacteria"/>
</dbReference>
<dbReference type="HOGENOM" id="CLU_007100_1_5_0"/>
<dbReference type="OrthoDB" id="9811718at2"/>
<dbReference type="Proteomes" id="UP000002209">
    <property type="component" value="Chromosome"/>
</dbReference>
<dbReference type="GO" id="GO:0005886">
    <property type="term" value="C:plasma membrane"/>
    <property type="evidence" value="ECO:0007669"/>
    <property type="project" value="UniProtKB-SubCell"/>
</dbReference>
<dbReference type="GO" id="GO:0008137">
    <property type="term" value="F:NADH dehydrogenase (ubiquinone) activity"/>
    <property type="evidence" value="ECO:0007669"/>
    <property type="project" value="InterPro"/>
</dbReference>
<dbReference type="GO" id="GO:0050136">
    <property type="term" value="F:NADH:ubiquinone reductase (non-electrogenic) activity"/>
    <property type="evidence" value="ECO:0007669"/>
    <property type="project" value="UniProtKB-UniRule"/>
</dbReference>
<dbReference type="GO" id="GO:0048038">
    <property type="term" value="F:quinone binding"/>
    <property type="evidence" value="ECO:0007669"/>
    <property type="project" value="UniProtKB-KW"/>
</dbReference>
<dbReference type="GO" id="GO:0042773">
    <property type="term" value="P:ATP synthesis coupled electron transport"/>
    <property type="evidence" value="ECO:0007669"/>
    <property type="project" value="InterPro"/>
</dbReference>
<dbReference type="HAMAP" id="MF_00445">
    <property type="entry name" value="NDH1_NuoN_1"/>
    <property type="match status" value="1"/>
</dbReference>
<dbReference type="InterPro" id="IPR010096">
    <property type="entry name" value="NADH-Q_OxRdtase_suN/2"/>
</dbReference>
<dbReference type="InterPro" id="IPR001750">
    <property type="entry name" value="ND/Mrp_TM"/>
</dbReference>
<dbReference type="NCBIfam" id="TIGR01770">
    <property type="entry name" value="NDH_I_N"/>
    <property type="match status" value="1"/>
</dbReference>
<dbReference type="PANTHER" id="PTHR22773">
    <property type="entry name" value="NADH DEHYDROGENASE"/>
    <property type="match status" value="1"/>
</dbReference>
<dbReference type="Pfam" id="PF00361">
    <property type="entry name" value="Proton_antipo_M"/>
    <property type="match status" value="1"/>
</dbReference>
<feature type="chain" id="PRO_0000391149" description="NADH-quinone oxidoreductase subunit N">
    <location>
        <begin position="1"/>
        <end position="520"/>
    </location>
</feature>
<feature type="transmembrane region" description="Helical" evidence="1">
    <location>
        <begin position="13"/>
        <end position="33"/>
    </location>
</feature>
<feature type="transmembrane region" description="Helical" evidence="1">
    <location>
        <begin position="55"/>
        <end position="75"/>
    </location>
</feature>
<feature type="transmembrane region" description="Helical" evidence="1">
    <location>
        <begin position="87"/>
        <end position="107"/>
    </location>
</feature>
<feature type="transmembrane region" description="Helical" evidence="1">
    <location>
        <begin position="115"/>
        <end position="135"/>
    </location>
</feature>
<feature type="transmembrane region" description="Helical" evidence="1">
    <location>
        <begin position="141"/>
        <end position="161"/>
    </location>
</feature>
<feature type="transmembrane region" description="Helical" evidence="1">
    <location>
        <begin position="176"/>
        <end position="196"/>
    </location>
</feature>
<feature type="transmembrane region" description="Helical" evidence="1">
    <location>
        <begin position="219"/>
        <end position="239"/>
    </location>
</feature>
<feature type="transmembrane region" description="Helical" evidence="1">
    <location>
        <begin position="250"/>
        <end position="270"/>
    </location>
</feature>
<feature type="transmembrane region" description="Helical" evidence="1">
    <location>
        <begin position="285"/>
        <end position="305"/>
    </location>
</feature>
<feature type="transmembrane region" description="Helical" evidence="1">
    <location>
        <begin position="313"/>
        <end position="333"/>
    </location>
</feature>
<feature type="transmembrane region" description="Helical" evidence="1">
    <location>
        <begin position="339"/>
        <end position="359"/>
    </location>
</feature>
<feature type="transmembrane region" description="Helical" evidence="1">
    <location>
        <begin position="383"/>
        <end position="403"/>
    </location>
</feature>
<feature type="transmembrane region" description="Helical" evidence="1">
    <location>
        <begin position="425"/>
        <end position="445"/>
    </location>
</feature>
<feature type="transmembrane region" description="Helical" evidence="1">
    <location>
        <begin position="468"/>
        <end position="488"/>
    </location>
</feature>
<feature type="region of interest" description="Disordered" evidence="2">
    <location>
        <begin position="494"/>
        <end position="520"/>
    </location>
</feature>
<feature type="compositionally biased region" description="Low complexity" evidence="2">
    <location>
        <begin position="494"/>
        <end position="508"/>
    </location>
</feature>
<proteinExistence type="inferred from homology"/>